<proteinExistence type="inferred from homology"/>
<protein>
    <recommendedName>
        <fullName evidence="1">Glycine--tRNA ligase beta subunit</fullName>
        <ecNumber evidence="1">6.1.1.14</ecNumber>
    </recommendedName>
    <alternativeName>
        <fullName evidence="1">Glycyl-tRNA synthetase beta subunit</fullName>
        <shortName evidence="1">GlyRS</shortName>
    </alternativeName>
</protein>
<reference key="1">
    <citation type="submission" date="2008-08" db="EMBL/GenBank/DDBJ databases">
        <title>Complete sequence of Anaeromyxobacter sp. K.</title>
        <authorList>
            <consortium name="US DOE Joint Genome Institute"/>
            <person name="Lucas S."/>
            <person name="Copeland A."/>
            <person name="Lapidus A."/>
            <person name="Glavina del Rio T."/>
            <person name="Dalin E."/>
            <person name="Tice H."/>
            <person name="Bruce D."/>
            <person name="Goodwin L."/>
            <person name="Pitluck S."/>
            <person name="Saunders E."/>
            <person name="Brettin T."/>
            <person name="Detter J.C."/>
            <person name="Han C."/>
            <person name="Larimer F."/>
            <person name="Land M."/>
            <person name="Hauser L."/>
            <person name="Kyrpides N."/>
            <person name="Ovchinnikiva G."/>
            <person name="Beliaev A."/>
        </authorList>
    </citation>
    <scope>NUCLEOTIDE SEQUENCE [LARGE SCALE GENOMIC DNA]</scope>
    <source>
        <strain>K</strain>
    </source>
</reference>
<evidence type="ECO:0000255" key="1">
    <source>
        <dbReference type="HAMAP-Rule" id="MF_00255"/>
    </source>
</evidence>
<sequence length="701" mass="75745">MADLLFEIGAEEIPAGFVPGALRQLEDDLAKALADARLAHGEVRSVGTPRRLAVWARDVAPKQTDARTEAFGPPVAQAYDAEGKPTPAATGFARSQGVEVSALVRAQTPKGERVAVTKVEKGRRAEQVLPALLERLVGGLRFRKAMRSRFDEATFARPVRWMVALLGGRPLKVRHGEVTSGKVTYGHRFLAPKAIALKGTPDDYLAKLRRAHVLADPVERRAALLAELARAGKEAAGKVREDPALVEQVLYLVEEPTAVVGEFEKSNLELPPEVVISEMRNHQRYFAVVDGKGRLKNRFVAVSATRVKDPAVARHGYERVLRARLADARFFFEEDRKRKLHERIEDLGRRTFQAKLGSELDRAQRIGAVASALARALGKDALVADLLEASRLAKVDLNTGMVGEFPELQGTMGAHYARLEGLKPEIADAIEDHYKPIGAAEELPRSDLGALVAVADRLHSLVGIIGVGEKATGAADPFGLRRAAIGILRIVIARGYHLSLAAAVEQTLDALSGVKLAAGRALVAEQVLDFLRGRVRAAWTERFDADLVEAVLAAGSDDVVDARRRLEALADAKARPDFGSLAVAFKRVANIQEKAGGSGAAAVDPALLRDAAEKDLLAALEKVEQEVVARRAARDYPAVLRTVATLEPAVARFFDGVLVMAEDPALRANRLGLMRRVAALFSDLADFRKIQAEAPAQARAG</sequence>
<organism>
    <name type="scientific">Anaeromyxobacter sp. (strain K)</name>
    <dbReference type="NCBI Taxonomy" id="447217"/>
    <lineage>
        <taxon>Bacteria</taxon>
        <taxon>Pseudomonadati</taxon>
        <taxon>Myxococcota</taxon>
        <taxon>Myxococcia</taxon>
        <taxon>Myxococcales</taxon>
        <taxon>Cystobacterineae</taxon>
        <taxon>Anaeromyxobacteraceae</taxon>
        <taxon>Anaeromyxobacter</taxon>
    </lineage>
</organism>
<comment type="catalytic activity">
    <reaction evidence="1">
        <text>tRNA(Gly) + glycine + ATP = glycyl-tRNA(Gly) + AMP + diphosphate</text>
        <dbReference type="Rhea" id="RHEA:16013"/>
        <dbReference type="Rhea" id="RHEA-COMP:9664"/>
        <dbReference type="Rhea" id="RHEA-COMP:9683"/>
        <dbReference type="ChEBI" id="CHEBI:30616"/>
        <dbReference type="ChEBI" id="CHEBI:33019"/>
        <dbReference type="ChEBI" id="CHEBI:57305"/>
        <dbReference type="ChEBI" id="CHEBI:78442"/>
        <dbReference type="ChEBI" id="CHEBI:78522"/>
        <dbReference type="ChEBI" id="CHEBI:456215"/>
        <dbReference type="EC" id="6.1.1.14"/>
    </reaction>
</comment>
<comment type="subunit">
    <text evidence="1">Tetramer of two alpha and two beta subunits.</text>
</comment>
<comment type="subcellular location">
    <subcellularLocation>
        <location evidence="1">Cytoplasm</location>
    </subcellularLocation>
</comment>
<comment type="similarity">
    <text evidence="1">Belongs to the class-II aminoacyl-tRNA synthetase family.</text>
</comment>
<gene>
    <name evidence="1" type="primary">glyS</name>
    <name type="ordered locus">AnaeK_2554</name>
</gene>
<keyword id="KW-0030">Aminoacyl-tRNA synthetase</keyword>
<keyword id="KW-0067">ATP-binding</keyword>
<keyword id="KW-0963">Cytoplasm</keyword>
<keyword id="KW-0436">Ligase</keyword>
<keyword id="KW-0547">Nucleotide-binding</keyword>
<keyword id="KW-0648">Protein biosynthesis</keyword>
<name>SYGB_ANASK</name>
<accession>B4UG87</accession>
<feature type="chain" id="PRO_1000197168" description="Glycine--tRNA ligase beta subunit">
    <location>
        <begin position="1"/>
        <end position="701"/>
    </location>
</feature>
<dbReference type="EC" id="6.1.1.14" evidence="1"/>
<dbReference type="EMBL" id="CP001131">
    <property type="protein sequence ID" value="ACG73779.1"/>
    <property type="molecule type" value="Genomic_DNA"/>
</dbReference>
<dbReference type="RefSeq" id="WP_012526563.1">
    <property type="nucleotide sequence ID" value="NC_011145.1"/>
</dbReference>
<dbReference type="SMR" id="B4UG87"/>
<dbReference type="KEGG" id="ank:AnaeK_2554"/>
<dbReference type="HOGENOM" id="CLU_007220_2_2_7"/>
<dbReference type="OrthoDB" id="9775440at2"/>
<dbReference type="Proteomes" id="UP000001871">
    <property type="component" value="Chromosome"/>
</dbReference>
<dbReference type="GO" id="GO:0005829">
    <property type="term" value="C:cytosol"/>
    <property type="evidence" value="ECO:0007669"/>
    <property type="project" value="TreeGrafter"/>
</dbReference>
<dbReference type="GO" id="GO:0004814">
    <property type="term" value="F:arginine-tRNA ligase activity"/>
    <property type="evidence" value="ECO:0007669"/>
    <property type="project" value="InterPro"/>
</dbReference>
<dbReference type="GO" id="GO:0005524">
    <property type="term" value="F:ATP binding"/>
    <property type="evidence" value="ECO:0007669"/>
    <property type="project" value="UniProtKB-UniRule"/>
</dbReference>
<dbReference type="GO" id="GO:0004820">
    <property type="term" value="F:glycine-tRNA ligase activity"/>
    <property type="evidence" value="ECO:0007669"/>
    <property type="project" value="UniProtKB-UniRule"/>
</dbReference>
<dbReference type="GO" id="GO:0006420">
    <property type="term" value="P:arginyl-tRNA aminoacylation"/>
    <property type="evidence" value="ECO:0007669"/>
    <property type="project" value="InterPro"/>
</dbReference>
<dbReference type="GO" id="GO:0006426">
    <property type="term" value="P:glycyl-tRNA aminoacylation"/>
    <property type="evidence" value="ECO:0007669"/>
    <property type="project" value="UniProtKB-UniRule"/>
</dbReference>
<dbReference type="HAMAP" id="MF_00255">
    <property type="entry name" value="Gly_tRNA_synth_beta"/>
    <property type="match status" value="1"/>
</dbReference>
<dbReference type="InterPro" id="IPR008909">
    <property type="entry name" value="DALR_anticod-bd"/>
</dbReference>
<dbReference type="InterPro" id="IPR015944">
    <property type="entry name" value="Gly-tRNA-synth_bsu"/>
</dbReference>
<dbReference type="InterPro" id="IPR006194">
    <property type="entry name" value="Gly-tRNA-synth_heterodimer"/>
</dbReference>
<dbReference type="NCBIfam" id="TIGR00211">
    <property type="entry name" value="glyS"/>
    <property type="match status" value="1"/>
</dbReference>
<dbReference type="PANTHER" id="PTHR30075:SF2">
    <property type="entry name" value="GLYCINE--TRNA LIGASE, CHLOROPLASTIC_MITOCHONDRIAL 2"/>
    <property type="match status" value="1"/>
</dbReference>
<dbReference type="PANTHER" id="PTHR30075">
    <property type="entry name" value="GLYCYL-TRNA SYNTHETASE"/>
    <property type="match status" value="1"/>
</dbReference>
<dbReference type="Pfam" id="PF05746">
    <property type="entry name" value="DALR_1"/>
    <property type="match status" value="1"/>
</dbReference>
<dbReference type="Pfam" id="PF02092">
    <property type="entry name" value="tRNA_synt_2f"/>
    <property type="match status" value="1"/>
</dbReference>
<dbReference type="PRINTS" id="PR01045">
    <property type="entry name" value="TRNASYNTHGB"/>
</dbReference>
<dbReference type="SMART" id="SM00836">
    <property type="entry name" value="DALR_1"/>
    <property type="match status" value="1"/>
</dbReference>
<dbReference type="SUPFAM" id="SSF109604">
    <property type="entry name" value="HD-domain/PDEase-like"/>
    <property type="match status" value="1"/>
</dbReference>
<dbReference type="PROSITE" id="PS50861">
    <property type="entry name" value="AA_TRNA_LIGASE_II_GLYAB"/>
    <property type="match status" value="1"/>
</dbReference>